<comment type="function">
    <text evidence="4">Component of the intraflagellar transport complex B (IFT-B) involved in flagellar assembly (Probable).</text>
</comment>
<comment type="subcellular location">
    <subcellularLocation>
        <location evidence="1">Cell projection</location>
        <location evidence="1">Cilium</location>
        <location evidence="1">Flagellum</location>
    </subcellularLocation>
    <subcellularLocation>
        <location evidence="1">Cytoplasm</location>
        <location evidence="1">Cytoskeleton</location>
        <location evidence="1">Flagellum axoneme</location>
    </subcellularLocation>
    <subcellularLocation>
        <location evidence="1">Cytoplasm</location>
        <location evidence="1">Cytoskeleton</location>
        <location evidence="1">Flagellum basal body</location>
    </subcellularLocation>
    <text evidence="1">Localizes to the cytoplasmic and membrane-bound portions of each of the eight axonemes, localizing particularly at the flagellar pores and at the distal flagellar tips. Localizes to the basal bodies.</text>
</comment>
<comment type="similarity">
    <text evidence="3">Belongs to the IFT57 family.</text>
</comment>
<reference evidence="5 7" key="1">
    <citation type="journal article" date="2007" name="Science">
        <title>Genomic minimalism in the early diverging intestinal parasite Giardia lamblia.</title>
        <authorList>
            <person name="Morrison H.G."/>
            <person name="McArthur A.G."/>
            <person name="Gillin F.D."/>
            <person name="Aley S.B."/>
            <person name="Adam R.D."/>
            <person name="Olsen G.J."/>
            <person name="Best A.A."/>
            <person name="Cande W.Z."/>
            <person name="Chen F."/>
            <person name="Cipriano M.J."/>
            <person name="Davids B.J."/>
            <person name="Dawson S.C."/>
            <person name="Elmendorf H.G."/>
            <person name="Hehl A.B."/>
            <person name="Holder M.E."/>
            <person name="Huse S.M."/>
            <person name="Kim U.U."/>
            <person name="Lasek-Nesselquist E."/>
            <person name="Manning G."/>
            <person name="Nigam A."/>
            <person name="Nixon J.E.J."/>
            <person name="Palm D."/>
            <person name="Passamaneck N.E."/>
            <person name="Prabhu A."/>
            <person name="Reich C.I."/>
            <person name="Reiner D.S."/>
            <person name="Samuelson J."/>
            <person name="Svard S.G."/>
            <person name="Sogin M.L."/>
        </authorList>
    </citation>
    <scope>NUCLEOTIDE SEQUENCE [LARGE SCALE GENOMIC DNA]</scope>
    <source>
        <strain evidence="7">ATCC 50803 / WB clone C6</strain>
    </source>
</reference>
<reference evidence="6" key="2">
    <citation type="submission" date="2019-07" db="EMBL/GenBank/DDBJ databases">
        <title>New Giardia intestinalis WB genome in near-complete chromosomes.</title>
        <authorList>
            <person name="Xu F."/>
            <person name="Jex A."/>
            <person name="Svard S.G."/>
        </authorList>
    </citation>
    <scope>NUCLEOTIDE SEQUENCE [LARGE SCALE GENOMIC DNA]</scope>
    <source>
        <strain evidence="6">ATCC 50803 / WB clone C6</strain>
    </source>
</reference>
<reference key="3">
    <citation type="journal article" date="2019" name="Elife">
        <title>Length-dependent disassembly maintains four different flagellar lengths in Giardia.</title>
        <authorList>
            <person name="McInally S.G."/>
            <person name="Kondev J."/>
            <person name="Dawson S.C."/>
        </authorList>
    </citation>
    <scope>FUNCTION</scope>
    <scope>SUBCELLULAR LOCATION</scope>
    <source>
        <strain evidence="2">ATCC 50803 / WB clone C6</strain>
    </source>
</reference>
<proteinExistence type="inferred from homology"/>
<gene>
    <name evidence="6" type="ORF">GL50803_0014713</name>
    <name evidence="5" type="ORF">GL50803_14713</name>
</gene>
<dbReference type="EMBL" id="AACB02000001">
    <property type="protein sequence ID" value="EDO82170.1"/>
    <property type="molecule type" value="Genomic_DNA"/>
</dbReference>
<dbReference type="EMBL" id="AACB03000003">
    <property type="protein sequence ID" value="KAE8302871.1"/>
    <property type="molecule type" value="Genomic_DNA"/>
</dbReference>
<dbReference type="RefSeq" id="XP_001709844.1">
    <property type="nucleotide sequence ID" value="XM_001709792.1"/>
</dbReference>
<dbReference type="SMR" id="A8B1U4"/>
<dbReference type="STRING" id="184922.A8B1U4"/>
<dbReference type="EnsemblProtists" id="EDO82170">
    <property type="protein sequence ID" value="EDO82170"/>
    <property type="gene ID" value="GL50803_14713"/>
</dbReference>
<dbReference type="GeneID" id="5702794"/>
<dbReference type="KEGG" id="gla:GL50803_0014713"/>
<dbReference type="VEuPathDB" id="GiardiaDB:GL50803_14713"/>
<dbReference type="HOGENOM" id="CLU_714642_0_0_1"/>
<dbReference type="OMA" id="XGRTADF"/>
<dbReference type="Proteomes" id="UP000001548">
    <property type="component" value="Chromosome 3"/>
</dbReference>
<dbReference type="GO" id="GO:0097729">
    <property type="term" value="C:9+2 motile cilium"/>
    <property type="evidence" value="ECO:0000314"/>
    <property type="project" value="UniProtKB"/>
</dbReference>
<dbReference type="GO" id="GO:0005930">
    <property type="term" value="C:axoneme"/>
    <property type="evidence" value="ECO:0000314"/>
    <property type="project" value="UniProtKB"/>
</dbReference>
<dbReference type="GO" id="GO:0036064">
    <property type="term" value="C:ciliary basal body"/>
    <property type="evidence" value="ECO:0000314"/>
    <property type="project" value="UniProtKB"/>
</dbReference>
<dbReference type="GO" id="GO:1990900">
    <property type="term" value="C:ciliary pocket collar"/>
    <property type="evidence" value="ECO:0000314"/>
    <property type="project" value="UniProtKB"/>
</dbReference>
<dbReference type="GO" id="GO:0097542">
    <property type="term" value="C:ciliary tip"/>
    <property type="evidence" value="ECO:0000314"/>
    <property type="project" value="UniProtKB"/>
</dbReference>
<dbReference type="GO" id="GO:0005929">
    <property type="term" value="C:cilium"/>
    <property type="evidence" value="ECO:0000318"/>
    <property type="project" value="GO_Central"/>
</dbReference>
<dbReference type="GO" id="GO:0005794">
    <property type="term" value="C:Golgi apparatus"/>
    <property type="evidence" value="ECO:0000318"/>
    <property type="project" value="GO_Central"/>
</dbReference>
<dbReference type="GO" id="GO:0030992">
    <property type="term" value="C:intraciliary transport particle B"/>
    <property type="evidence" value="ECO:0000318"/>
    <property type="project" value="GO_Central"/>
</dbReference>
<dbReference type="GO" id="GO:0005815">
    <property type="term" value="C:microtubule organizing center"/>
    <property type="evidence" value="ECO:0000318"/>
    <property type="project" value="GO_Central"/>
</dbReference>
<dbReference type="GO" id="GO:0060271">
    <property type="term" value="P:cilium assembly"/>
    <property type="evidence" value="ECO:0000305"/>
    <property type="project" value="UniProtKB"/>
</dbReference>
<dbReference type="GO" id="GO:0042073">
    <property type="term" value="P:intraciliary transport"/>
    <property type="evidence" value="ECO:0000318"/>
    <property type="project" value="GO_Central"/>
</dbReference>
<dbReference type="GO" id="GO:0035735">
    <property type="term" value="P:intraciliary transport involved in cilium assembly"/>
    <property type="evidence" value="ECO:0000305"/>
    <property type="project" value="UniProtKB"/>
</dbReference>
<dbReference type="GO" id="GO:1905515">
    <property type="term" value="P:non-motile cilium assembly"/>
    <property type="evidence" value="ECO:0000318"/>
    <property type="project" value="GO_Central"/>
</dbReference>
<dbReference type="InterPro" id="IPR019530">
    <property type="entry name" value="Intra-flagellar_transport_57"/>
</dbReference>
<dbReference type="PANTHER" id="PTHR16011">
    <property type="entry name" value="IFT57/HIPPI"/>
    <property type="match status" value="1"/>
</dbReference>
<dbReference type="PANTHER" id="PTHR16011:SF0">
    <property type="entry name" value="INTRAFLAGELLAR TRANSPORT PROTEIN 57 HOMOLOG"/>
    <property type="match status" value="1"/>
</dbReference>
<dbReference type="Pfam" id="PF10498">
    <property type="entry name" value="IFT57"/>
    <property type="match status" value="1"/>
</dbReference>
<evidence type="ECO:0000269" key="1">
    <source>
    </source>
</evidence>
<evidence type="ECO:0000303" key="2">
    <source>
    </source>
</evidence>
<evidence type="ECO:0000305" key="3"/>
<evidence type="ECO:0000305" key="4">
    <source>
    </source>
</evidence>
<evidence type="ECO:0000312" key="5">
    <source>
        <dbReference type="EMBL" id="EDO82170.1"/>
    </source>
</evidence>
<evidence type="ECO:0000312" key="6">
    <source>
        <dbReference type="EMBL" id="KAE8302871.1"/>
    </source>
</evidence>
<evidence type="ECO:0000312" key="7">
    <source>
        <dbReference type="Proteomes" id="UP000001548"/>
    </source>
</evidence>
<accession>A8B1U4</accession>
<sequence>MIAPRLSMPAIVNAQSLVAKLRQLNCEKNYCHPNNLPGFTASAFYKESSSPLDQLVQTARLCHWLLSQLGISVQGVSEFDDPIAISTDLLVACKDIVNVANIPPHRIRMGYGDDLTALVLGIADACLAKLQPNIVSWKSLGSENANAGVERDNDDDDAPILDDLIVDDALIGTMTAKKGTFTTAAGLATGSLTTDSGCIAPGLISEADWEQELMAVDSQLGGKQLGGVYAGQDWRKDVVSMSLLAKALSKETGSCAQSISGLVTDFGKQLERISTREQHLNSQVGQYSAKLGDANRTHAGVTEELAELSQSISALTGELSTINEKLRALKVELQVESARASDTSNIHIVKTAFSSLSGEIRQLDLRITLAQQRLFSIAPPEPNTVRI</sequence>
<protein>
    <recommendedName>
        <fullName evidence="2">Intraflagellar transport protein 57</fullName>
        <shortName evidence="2">IFT57</shortName>
    </recommendedName>
    <alternativeName>
        <fullName evidence="5">IFT complex B</fullName>
    </alternativeName>
    <alternativeName>
        <fullName evidence="6">Intraflagellar transport protein IFT57</fullName>
    </alternativeName>
</protein>
<keyword id="KW-0966">Cell projection</keyword>
<keyword id="KW-0969">Cilium</keyword>
<keyword id="KW-0970">Cilium biogenesis/degradation</keyword>
<keyword id="KW-0963">Cytoplasm</keyword>
<keyword id="KW-0206">Cytoskeleton</keyword>
<keyword id="KW-0282">Flagellum</keyword>
<keyword id="KW-1185">Reference proteome</keyword>
<name>IFT57_GIAIC</name>
<organism evidence="5">
    <name type="scientific">Giardia intestinalis (strain ATCC 50803 / WB clone C6)</name>
    <name type="common">Giardia lamblia</name>
    <dbReference type="NCBI Taxonomy" id="184922"/>
    <lineage>
        <taxon>Eukaryota</taxon>
        <taxon>Metamonada</taxon>
        <taxon>Diplomonadida</taxon>
        <taxon>Hexamitidae</taxon>
        <taxon>Giardiinae</taxon>
        <taxon>Giardia</taxon>
    </lineage>
</organism>
<feature type="chain" id="PRO_0000459308" description="Intraflagellar transport protein 57">
    <location>
        <begin position="1"/>
        <end position="387"/>
    </location>
</feature>